<organism>
    <name type="scientific">Penicillium oxalicum (strain 114-2 / CGMCC 5302)</name>
    <name type="common">Penicillium decumbens</name>
    <dbReference type="NCBI Taxonomy" id="933388"/>
    <lineage>
        <taxon>Eukaryota</taxon>
        <taxon>Fungi</taxon>
        <taxon>Dikarya</taxon>
        <taxon>Ascomycota</taxon>
        <taxon>Pezizomycotina</taxon>
        <taxon>Eurotiomycetes</taxon>
        <taxon>Eurotiomycetidae</taxon>
        <taxon>Eurotiales</taxon>
        <taxon>Aspergillaceae</taxon>
        <taxon>Penicillium</taxon>
    </lineage>
</organism>
<gene>
    <name evidence="3" type="primary">opdJ</name>
    <name type="ORF">PDE_01234</name>
</gene>
<reference key="1">
    <citation type="journal article" date="2013" name="PLoS ONE">
        <title>Genomic and secretomic analyses reveal unique features of the lignocellulolytic enzyme system of Penicillium decumbens.</title>
        <authorList>
            <person name="Liu G."/>
            <person name="Zhang L."/>
            <person name="Wei X."/>
            <person name="Zou G."/>
            <person name="Qin Y."/>
            <person name="Ma L."/>
            <person name="Li J."/>
            <person name="Zheng H."/>
            <person name="Wang S."/>
            <person name="Wang C."/>
            <person name="Xun L."/>
            <person name="Zhao G.-P."/>
            <person name="Zhou Z."/>
            <person name="Qu Y."/>
        </authorList>
    </citation>
    <scope>NUCLEOTIDE SEQUENCE [LARGE SCALE GENOMIC DNA]</scope>
    <source>
        <strain>114-2 / CGMCC 5302</strain>
    </source>
</reference>
<reference key="2">
    <citation type="journal article" date="2022" name="Mar. Drugs">
        <title>Identification of PKS-NRPS Hybrid Metabolites in Marine-Derived Penicillium oxalicum.</title>
        <authorList>
            <person name="Li H."/>
            <person name="Zhang W."/>
            <person name="Zhang X."/>
            <person name="Tang S."/>
            <person name="Men P."/>
            <person name="Xiong M."/>
            <person name="Li Z."/>
            <person name="Zhang Y."/>
            <person name="Huang X."/>
            <person name="Lu X."/>
        </authorList>
    </citation>
    <scope>FUNCTION</scope>
    <scope>DISRUPTION PHENOTYPE</scope>
</reference>
<evidence type="ECO:0000255" key="1">
    <source>
        <dbReference type="PROSITE-ProRule" id="PRU00227"/>
    </source>
</evidence>
<evidence type="ECO:0000269" key="2">
    <source>
    </source>
</evidence>
<evidence type="ECO:0000303" key="3">
    <source>
    </source>
</evidence>
<name>OPDJ_PENO1</name>
<proteinExistence type="inferred from homology"/>
<comment type="function">
    <text evidence="2">Transcription factor that positively regulates the gene cluster that mediates the biosynthesis of oxopyrrolidines, polyketide-amino acid hybrid compounds with feature structures of tetramic acid.</text>
</comment>
<comment type="subcellular location">
    <subcellularLocation>
        <location evidence="1">Nucleus</location>
    </subcellularLocation>
</comment>
<comment type="disruption phenotype">
    <text evidence="2">Impairs the production of oxopyrrolidines A and B.</text>
</comment>
<protein>
    <recommendedName>
        <fullName evidence="3">Transcription factor opdJ</fullName>
    </recommendedName>
    <alternativeName>
        <fullName evidence="3">Oxopyrrolidines biosynthesis cluster protein J</fullName>
    </alternativeName>
</protein>
<sequence>MKPNKPRYIACSHCSKAKARCDRKVPCSRCVSKQLVCHPRSARRAIHTPTEQHLRWLEPGDVPRRDEQQTILLAQQTPVDADNTMVTGTHMRPDSPDVSSQLQSTGASYISADKMTHLSTEWLHQITPESSMHMPLNVPLDQDVTHQSSPDLDLINELIGYPACDDLGTTYMEFVGIGPTDSPPLSPSRDGRSVKDRNSRLVALCPGHPRHWSEDFSSQMRISMQRFEQTINLRQPWTTSCSETWASLPYPSVMNPITETTRDSLVAVSQLLLLQTRSIHLWENGRNSRRLSSGNLAVLNLPPAKVLDSLLRAYTSCFDQYFGLLSSELQDPNDIMTHPEHDLKAAGILLLLMIAIGATANPEPKMHIFAIGMAEMCRTALCDLMEDEVPNTRPDILSHCALLLLYLGMWSGERWLMRIICAHRQIYTQLLHRCPLSFNTNDSLQKLHGGLNLSQQWQHWKEQEMQSRLTYAWMVTDQEWSLVYDTPSNFSVDMMTQSLPNSERLWRATSEGDWAALAPEMFGTQAPTCLRDLYTSFMNHELRPGRSTLPLQYLRLLLVPLHGMVFHLRQWLQSFPNCPVRWRKNNQGLSNPAIHAQLDQVQALLPEWYDLAIHLTNTSPAFVSMLVMYHLIALNAMASFPNIEDALLRGPLDRSQLPNPRGSDPCPLGTCQSTVAEDSAEEALVHCGQILRLVRLMPPSDQPLWWSAVVYRIALITIFLSIKRHPHHWLPAVMLGQMVQDTASSSGTSTDGSGVSLMSNPLFTDRVDAQPHHRPVILNNVAPNDNELLQFTKYREGEPCLAVRDGQLIELRQPRDVMSFFIDLVDGGHLPALHATNFQASVKDSLERLADRWGFLSLHKT</sequence>
<keyword id="KW-0238">DNA-binding</keyword>
<keyword id="KW-0479">Metal-binding</keyword>
<keyword id="KW-0539">Nucleus</keyword>
<keyword id="KW-1185">Reference proteome</keyword>
<keyword id="KW-0804">Transcription</keyword>
<keyword id="KW-0805">Transcription regulation</keyword>
<keyword id="KW-0862">Zinc</keyword>
<dbReference type="EMBL" id="KB644408">
    <property type="protein sequence ID" value="EPS26298.1"/>
    <property type="molecule type" value="Genomic_DNA"/>
</dbReference>
<dbReference type="STRING" id="933388.S8AKF3"/>
<dbReference type="eggNOG" id="KOG1721">
    <property type="taxonomic scope" value="Eukaryota"/>
</dbReference>
<dbReference type="HOGENOM" id="CLU_364120_0_0_1"/>
<dbReference type="OrthoDB" id="40579at2759"/>
<dbReference type="PhylomeDB" id="S8AKF3"/>
<dbReference type="Proteomes" id="UP000019376">
    <property type="component" value="Unassembled WGS sequence"/>
</dbReference>
<dbReference type="GO" id="GO:0005634">
    <property type="term" value="C:nucleus"/>
    <property type="evidence" value="ECO:0007669"/>
    <property type="project" value="UniProtKB-SubCell"/>
</dbReference>
<dbReference type="GO" id="GO:0003677">
    <property type="term" value="F:DNA binding"/>
    <property type="evidence" value="ECO:0007669"/>
    <property type="project" value="UniProtKB-KW"/>
</dbReference>
<dbReference type="GO" id="GO:0000981">
    <property type="term" value="F:DNA-binding transcription factor activity, RNA polymerase II-specific"/>
    <property type="evidence" value="ECO:0007669"/>
    <property type="project" value="InterPro"/>
</dbReference>
<dbReference type="GO" id="GO:0008270">
    <property type="term" value="F:zinc ion binding"/>
    <property type="evidence" value="ECO:0007669"/>
    <property type="project" value="InterPro"/>
</dbReference>
<dbReference type="GO" id="GO:0006351">
    <property type="term" value="P:DNA-templated transcription"/>
    <property type="evidence" value="ECO:0007669"/>
    <property type="project" value="InterPro"/>
</dbReference>
<dbReference type="CDD" id="cd12148">
    <property type="entry name" value="fungal_TF_MHR"/>
    <property type="match status" value="1"/>
</dbReference>
<dbReference type="CDD" id="cd00067">
    <property type="entry name" value="GAL4"/>
    <property type="match status" value="1"/>
</dbReference>
<dbReference type="Gene3D" id="4.10.240.10">
    <property type="entry name" value="Zn(2)-C6 fungal-type DNA-binding domain"/>
    <property type="match status" value="1"/>
</dbReference>
<dbReference type="InterPro" id="IPR007219">
    <property type="entry name" value="Transcription_factor_dom_fun"/>
</dbReference>
<dbReference type="InterPro" id="IPR036864">
    <property type="entry name" value="Zn2-C6_fun-type_DNA-bd_sf"/>
</dbReference>
<dbReference type="InterPro" id="IPR001138">
    <property type="entry name" value="Zn2Cys6_DnaBD"/>
</dbReference>
<dbReference type="PANTHER" id="PTHR47660:SF2">
    <property type="entry name" value="TRANSCRIPTION FACTOR WITH C2H2 AND ZN(2)-CYS(6) DNA BINDING DOMAIN (EUROFUNG)"/>
    <property type="match status" value="1"/>
</dbReference>
<dbReference type="PANTHER" id="PTHR47660">
    <property type="entry name" value="TRANSCRIPTION FACTOR WITH C2H2 AND ZN(2)-CYS(6) DNA BINDING DOMAIN (EUROFUNG)-RELATED-RELATED"/>
    <property type="match status" value="1"/>
</dbReference>
<dbReference type="Pfam" id="PF04082">
    <property type="entry name" value="Fungal_trans"/>
    <property type="match status" value="1"/>
</dbReference>
<dbReference type="Pfam" id="PF00172">
    <property type="entry name" value="Zn_clus"/>
    <property type="match status" value="1"/>
</dbReference>
<dbReference type="SUPFAM" id="SSF57701">
    <property type="entry name" value="Zn2/Cys6 DNA-binding domain"/>
    <property type="match status" value="1"/>
</dbReference>
<dbReference type="PROSITE" id="PS00463">
    <property type="entry name" value="ZN2_CY6_FUNGAL_1"/>
    <property type="match status" value="1"/>
</dbReference>
<dbReference type="PROSITE" id="PS50048">
    <property type="entry name" value="ZN2_CY6_FUNGAL_2"/>
    <property type="match status" value="1"/>
</dbReference>
<feature type="chain" id="PRO_0000457066" description="Transcription factor opdJ">
    <location>
        <begin position="1"/>
        <end position="861"/>
    </location>
</feature>
<feature type="DNA-binding region" description="Zn(2)-C6 fungal-type" evidence="1">
    <location>
        <begin position="11"/>
        <end position="37"/>
    </location>
</feature>
<accession>S8AKF3</accession>